<evidence type="ECO:0000250" key="1">
    <source>
        <dbReference type="UniProtKB" id="Q4KLV1"/>
    </source>
</evidence>
<evidence type="ECO:0000250" key="2">
    <source>
        <dbReference type="UniProtKB" id="Q9Y6K0"/>
    </source>
</evidence>
<evidence type="ECO:0000255" key="3"/>
<evidence type="ECO:0000256" key="4">
    <source>
        <dbReference type="SAM" id="MobiDB-lite"/>
    </source>
</evidence>
<evidence type="ECO:0000305" key="5"/>
<evidence type="ECO:0000312" key="6">
    <source>
        <dbReference type="RGD" id="1359727"/>
    </source>
</evidence>
<proteinExistence type="evidence at transcript level"/>
<organism>
    <name type="scientific">Rattus norvegicus</name>
    <name type="common">Rat</name>
    <dbReference type="NCBI Taxonomy" id="10116"/>
    <lineage>
        <taxon>Eukaryota</taxon>
        <taxon>Metazoa</taxon>
        <taxon>Chordata</taxon>
        <taxon>Craniata</taxon>
        <taxon>Vertebrata</taxon>
        <taxon>Euteleostomi</taxon>
        <taxon>Mammalia</taxon>
        <taxon>Eutheria</taxon>
        <taxon>Euarchontoglires</taxon>
        <taxon>Glires</taxon>
        <taxon>Rodentia</taxon>
        <taxon>Myomorpha</taxon>
        <taxon>Muroidea</taxon>
        <taxon>Muridae</taxon>
        <taxon>Murinae</taxon>
        <taxon>Rattus</taxon>
    </lineage>
</organism>
<name>CEPT1_RAT</name>
<sequence length="416" mass="46498">MSGHRSTRKRCGDSHPESPVGFGHMSTTGCILNKLFQLPTPPLSRHQLKRLEEHRYQSAGRSLLEPLMQGYWEWLVGRVPSWIAPNLITIIGLSINICTTILLVFYCPTATEQAPLWAYIACACGLFIYQSLDAIDGKQARRTNSSSPLGELFDHGCDSLSTVFVVLGTCIAVQLGTNPDWMFFCCFAGTFMFYCAHWQTYVSGTLRFGIIDVTEVQIFIIIMHLLAVIGGPPFWQSMIPVLNIQMKLFPALCTVAGTIFSCTNYFRVIFTGGVGKNGSTIAGTSVLSPFLHIGSVITLAVMIYKKSAVQLFEKHPCLYILTFGFVSAKITNKLVVAHMTKSEMHLHDTAFIGPALLFLDQYFNSFIDEYIVLWIALVFSFFDLIRYCVSVCNQIASHLHIHVFRIKTSTAHSNHH</sequence>
<gene>
    <name evidence="6" type="primary">Cept1</name>
</gene>
<dbReference type="EC" id="2.7.8.1" evidence="2"/>
<dbReference type="EC" id="2.7.8.2" evidence="2"/>
<dbReference type="EC" id="2.7.8.22" evidence="2"/>
<dbReference type="EMBL" id="BC079471">
    <property type="protein sequence ID" value="AAH79471.1"/>
    <property type="molecule type" value="mRNA"/>
</dbReference>
<dbReference type="RefSeq" id="NP_001007700.1">
    <property type="nucleotide sequence ID" value="NM_001007699.1"/>
</dbReference>
<dbReference type="RefSeq" id="XP_006233178.1">
    <property type="nucleotide sequence ID" value="XM_006233116.4"/>
</dbReference>
<dbReference type="RefSeq" id="XP_006233180.1">
    <property type="nucleotide sequence ID" value="XM_006233118.5"/>
</dbReference>
<dbReference type="RefSeq" id="XP_017446413.1">
    <property type="nucleotide sequence ID" value="XM_017590924.3"/>
</dbReference>
<dbReference type="SMR" id="Q6AXM5"/>
<dbReference type="FunCoup" id="Q6AXM5">
    <property type="interactions" value="3886"/>
</dbReference>
<dbReference type="STRING" id="10116.ENSRNOP00000032597"/>
<dbReference type="GlyCosmos" id="Q6AXM5">
    <property type="glycosylation" value="1 site, No reported glycans"/>
</dbReference>
<dbReference type="GlyGen" id="Q6AXM5">
    <property type="glycosylation" value="1 site"/>
</dbReference>
<dbReference type="PhosphoSitePlus" id="Q6AXM5"/>
<dbReference type="PaxDb" id="10116-ENSRNOP00000032597"/>
<dbReference type="Ensembl" id="ENSRNOT00000036551.5">
    <property type="protein sequence ID" value="ENSRNOP00000032597.3"/>
    <property type="gene ID" value="ENSRNOG00000017723.6"/>
</dbReference>
<dbReference type="GeneID" id="310773"/>
<dbReference type="KEGG" id="rno:310773"/>
<dbReference type="UCSC" id="RGD:1359727">
    <property type="organism name" value="rat"/>
</dbReference>
<dbReference type="AGR" id="RGD:1359727"/>
<dbReference type="CTD" id="10390"/>
<dbReference type="RGD" id="1359727">
    <property type="gene designation" value="Cept1"/>
</dbReference>
<dbReference type="eggNOG" id="KOG2877">
    <property type="taxonomic scope" value="Eukaryota"/>
</dbReference>
<dbReference type="GeneTree" id="ENSGT00950000183117"/>
<dbReference type="HOGENOM" id="CLU_035066_1_0_1"/>
<dbReference type="InParanoid" id="Q6AXM5"/>
<dbReference type="OrthoDB" id="196717at2759"/>
<dbReference type="PhylomeDB" id="Q6AXM5"/>
<dbReference type="TreeFam" id="TF313270"/>
<dbReference type="Reactome" id="R-RNO-1483191">
    <property type="pathway name" value="Synthesis of PC"/>
</dbReference>
<dbReference type="Reactome" id="R-RNO-1483213">
    <property type="pathway name" value="Synthesis of PE"/>
</dbReference>
<dbReference type="UniPathway" id="UPA00558">
    <property type="reaction ID" value="UER00743"/>
</dbReference>
<dbReference type="UniPathway" id="UPA00753">
    <property type="reaction ID" value="UER00740"/>
</dbReference>
<dbReference type="PRO" id="PR:Q6AXM5"/>
<dbReference type="Proteomes" id="UP000002494">
    <property type="component" value="Chromosome 2"/>
</dbReference>
<dbReference type="Bgee" id="ENSRNOG00000017723">
    <property type="expression patterns" value="Expressed in liver and 20 other cell types or tissues"/>
</dbReference>
<dbReference type="GO" id="GO:0005789">
    <property type="term" value="C:endoplasmic reticulum membrane"/>
    <property type="evidence" value="ECO:0000266"/>
    <property type="project" value="RGD"/>
</dbReference>
<dbReference type="GO" id="GO:0005794">
    <property type="term" value="C:Golgi apparatus"/>
    <property type="evidence" value="ECO:0000318"/>
    <property type="project" value="GO_Central"/>
</dbReference>
<dbReference type="GO" id="GO:0031965">
    <property type="term" value="C:nuclear membrane"/>
    <property type="evidence" value="ECO:0007669"/>
    <property type="project" value="UniProtKB-SubCell"/>
</dbReference>
<dbReference type="GO" id="GO:0047359">
    <property type="term" value="F:1-alkenyl-2-acylglycerol choline phosphotransferase activity"/>
    <property type="evidence" value="ECO:0007669"/>
    <property type="project" value="UniProtKB-EC"/>
</dbReference>
<dbReference type="GO" id="GO:0004142">
    <property type="term" value="F:diacylglycerol cholinephosphotransferase activity"/>
    <property type="evidence" value="ECO:0000266"/>
    <property type="project" value="RGD"/>
</dbReference>
<dbReference type="GO" id="GO:0004307">
    <property type="term" value="F:ethanolaminephosphotransferase activity"/>
    <property type="evidence" value="ECO:0000266"/>
    <property type="project" value="RGD"/>
</dbReference>
<dbReference type="GO" id="GO:0046872">
    <property type="term" value="F:metal ion binding"/>
    <property type="evidence" value="ECO:0007669"/>
    <property type="project" value="UniProtKB-KW"/>
</dbReference>
<dbReference type="GO" id="GO:0016780">
    <property type="term" value="F:phosphotransferase activity, for other substituted phosphate groups"/>
    <property type="evidence" value="ECO:0000266"/>
    <property type="project" value="RGD"/>
</dbReference>
<dbReference type="GO" id="GO:0006656">
    <property type="term" value="P:phosphatidylcholine biosynthetic process"/>
    <property type="evidence" value="ECO:0000266"/>
    <property type="project" value="RGD"/>
</dbReference>
<dbReference type="GO" id="GO:0006646">
    <property type="term" value="P:phosphatidylethanolamine biosynthetic process"/>
    <property type="evidence" value="ECO:0000266"/>
    <property type="project" value="RGD"/>
</dbReference>
<dbReference type="FunFam" id="1.20.120.1760:FF:000002">
    <property type="entry name" value="Choline/ethanolamine phosphotransferase 1"/>
    <property type="match status" value="1"/>
</dbReference>
<dbReference type="Gene3D" id="1.20.120.1760">
    <property type="match status" value="1"/>
</dbReference>
<dbReference type="InterPro" id="IPR000462">
    <property type="entry name" value="CDP-OH_P_trans"/>
</dbReference>
<dbReference type="InterPro" id="IPR043130">
    <property type="entry name" value="CDP-OH_PTrfase_TM_dom"/>
</dbReference>
<dbReference type="InterPro" id="IPR048254">
    <property type="entry name" value="CDP_ALCOHOL_P_TRANSF_CS"/>
</dbReference>
<dbReference type="InterPro" id="IPR014472">
    <property type="entry name" value="CHOPT"/>
</dbReference>
<dbReference type="PANTHER" id="PTHR10414:SF27">
    <property type="entry name" value="CHOLINE_ETHANOLAMINEPHOSPHOTRANSFERASE 1"/>
    <property type="match status" value="1"/>
</dbReference>
<dbReference type="PANTHER" id="PTHR10414">
    <property type="entry name" value="ETHANOLAMINEPHOSPHOTRANSFERASE"/>
    <property type="match status" value="1"/>
</dbReference>
<dbReference type="Pfam" id="PF01066">
    <property type="entry name" value="CDP-OH_P_transf"/>
    <property type="match status" value="1"/>
</dbReference>
<dbReference type="PIRSF" id="PIRSF015665">
    <property type="entry name" value="CHOPT"/>
    <property type="match status" value="1"/>
</dbReference>
<dbReference type="PROSITE" id="PS00379">
    <property type="entry name" value="CDP_ALCOHOL_P_TRANSF"/>
    <property type="match status" value="1"/>
</dbReference>
<accession>Q6AXM5</accession>
<protein>
    <recommendedName>
        <fullName evidence="5">Choline/ethanolaminephosphotransferase 1</fullName>
        <ecNumber evidence="2">2.7.8.1</ecNumber>
        <ecNumber evidence="2">2.7.8.2</ecNumber>
    </recommendedName>
    <alternativeName>
        <fullName evidence="5">1-alkenyl-2-acylglycerol choline phosphotransferase</fullName>
        <ecNumber evidence="2">2.7.8.22</ecNumber>
    </alternativeName>
</protein>
<comment type="function">
    <text evidence="2">Catalyzes both phosphatidylcholine and phosphatidylethanolamine biosynthesis from CDP-choline and CDP-ethanolamine, respectively. Involved in protein-dependent process of phospholipid transport to distribute phosphatidyl choline to the lumenal surface. Has a higher cholinephosphotransferase activity than ethanolaminephosphotransferase activity.</text>
</comment>
<comment type="catalytic activity">
    <reaction evidence="2">
        <text>CDP-ethanolamine + a 1,2-diacyl-sn-glycerol = a 1,2-diacyl-sn-glycero-3-phosphoethanolamine + CMP + H(+)</text>
        <dbReference type="Rhea" id="RHEA:32943"/>
        <dbReference type="ChEBI" id="CHEBI:15378"/>
        <dbReference type="ChEBI" id="CHEBI:17815"/>
        <dbReference type="ChEBI" id="CHEBI:57876"/>
        <dbReference type="ChEBI" id="CHEBI:60377"/>
        <dbReference type="ChEBI" id="CHEBI:64612"/>
        <dbReference type="EC" id="2.7.8.1"/>
    </reaction>
    <physiologicalReaction direction="left-to-right" evidence="2">
        <dbReference type="Rhea" id="RHEA:32944"/>
    </physiologicalReaction>
</comment>
<comment type="catalytic activity">
    <reaction evidence="2">
        <text>CDP-choline + a 1,2-diacyl-sn-glycerol = a 1,2-diacyl-sn-glycero-3-phosphocholine + CMP + H(+)</text>
        <dbReference type="Rhea" id="RHEA:32939"/>
        <dbReference type="ChEBI" id="CHEBI:15378"/>
        <dbReference type="ChEBI" id="CHEBI:17815"/>
        <dbReference type="ChEBI" id="CHEBI:57643"/>
        <dbReference type="ChEBI" id="CHEBI:58779"/>
        <dbReference type="ChEBI" id="CHEBI:60377"/>
        <dbReference type="EC" id="2.7.8.2"/>
    </reaction>
    <physiologicalReaction direction="left-to-right" evidence="2">
        <dbReference type="Rhea" id="RHEA:32940"/>
    </physiologicalReaction>
</comment>
<comment type="catalytic activity">
    <reaction evidence="2">
        <text>1-O-alkyl-2-acyl-sn-glycerol + CDP-choline = a 1-O-alkyl-2-acyl-sn-glycero-3-phosphocholine + CMP + H(+)</text>
        <dbReference type="Rhea" id="RHEA:36179"/>
        <dbReference type="ChEBI" id="CHEBI:15378"/>
        <dbReference type="ChEBI" id="CHEBI:36702"/>
        <dbReference type="ChEBI" id="CHEBI:52595"/>
        <dbReference type="ChEBI" id="CHEBI:58779"/>
        <dbReference type="ChEBI" id="CHEBI:60377"/>
        <dbReference type="EC" id="2.7.8.2"/>
    </reaction>
    <physiologicalReaction direction="left-to-right" evidence="2">
        <dbReference type="Rhea" id="RHEA:36180"/>
    </physiologicalReaction>
</comment>
<comment type="catalytic activity">
    <reaction evidence="2">
        <text>a 1-O-(1Z-alkenyl)-2-acyl-sn-glycerol + CDP-choline = a 1-O-(1Z-alkenyl)-2-acyl-sn-glycero-3-phosphocholine + CMP + H(+)</text>
        <dbReference type="Rhea" id="RHEA:36227"/>
        <dbReference type="ChEBI" id="CHEBI:15378"/>
        <dbReference type="ChEBI" id="CHEBI:58779"/>
        <dbReference type="ChEBI" id="CHEBI:60377"/>
        <dbReference type="ChEBI" id="CHEBI:77286"/>
        <dbReference type="ChEBI" id="CHEBI:77296"/>
        <dbReference type="EC" id="2.7.8.22"/>
    </reaction>
    <physiologicalReaction direction="left-to-right" evidence="2">
        <dbReference type="Rhea" id="RHEA:36228"/>
    </physiologicalReaction>
</comment>
<comment type="catalytic activity">
    <reaction evidence="2">
        <text>1,2-dioctanoyl-sn-glycerol + CDP-choline = 1,2-dioctanoyl-sn-glycero-3-phosphocholine + CMP + H(+)</text>
        <dbReference type="Rhea" id="RHEA:54232"/>
        <dbReference type="ChEBI" id="CHEBI:15378"/>
        <dbReference type="ChEBI" id="CHEBI:58779"/>
        <dbReference type="ChEBI" id="CHEBI:60377"/>
        <dbReference type="ChEBI" id="CHEBI:76979"/>
        <dbReference type="ChEBI" id="CHEBI:78228"/>
    </reaction>
    <physiologicalReaction direction="left-to-right" evidence="2">
        <dbReference type="Rhea" id="RHEA:54233"/>
    </physiologicalReaction>
</comment>
<comment type="catalytic activity">
    <reaction evidence="2">
        <text>1,2-didecanoyl-sn-glycerol + CDP-choline = 1,2-didecanoyl-sn-glycero-3-phosphocholine + CMP + H(+)</text>
        <dbReference type="Rhea" id="RHEA:54236"/>
        <dbReference type="ChEBI" id="CHEBI:15378"/>
        <dbReference type="ChEBI" id="CHEBI:18155"/>
        <dbReference type="ChEBI" id="CHEBI:58779"/>
        <dbReference type="ChEBI" id="CHEBI:60377"/>
        <dbReference type="ChEBI" id="CHEBI:78226"/>
    </reaction>
    <physiologicalReaction direction="left-to-right" evidence="2">
        <dbReference type="Rhea" id="RHEA:54237"/>
    </physiologicalReaction>
</comment>
<comment type="catalytic activity">
    <reaction evidence="2">
        <text>CDP-choline + 1,2-di-(9Z-octadecenoyl)-sn-glycerol = 1,2-di-(9Z-octadecenoyl)-sn-glycero-3-phosphocholine + CMP + H(+)</text>
        <dbReference type="Rhea" id="RHEA:54240"/>
        <dbReference type="ChEBI" id="CHEBI:15378"/>
        <dbReference type="ChEBI" id="CHEBI:52333"/>
        <dbReference type="ChEBI" id="CHEBI:58779"/>
        <dbReference type="ChEBI" id="CHEBI:60377"/>
        <dbReference type="ChEBI" id="CHEBI:74669"/>
    </reaction>
    <physiologicalReaction direction="left-to-right" evidence="2">
        <dbReference type="Rhea" id="RHEA:54241"/>
    </physiologicalReaction>
</comment>
<comment type="catalytic activity">
    <reaction evidence="2">
        <text>1-hexadecanoyl-2-(9Z-octadecenoyl)-sn-glycerol + CDP-choline = 1-hexadecanoyl-2-(9Z-octadecenoyl)-sn-glycero-3-phosphocholine + CMP + H(+)</text>
        <dbReference type="Rhea" id="RHEA:54244"/>
        <dbReference type="ChEBI" id="CHEBI:15378"/>
        <dbReference type="ChEBI" id="CHEBI:58779"/>
        <dbReference type="ChEBI" id="CHEBI:60377"/>
        <dbReference type="ChEBI" id="CHEBI:73001"/>
        <dbReference type="ChEBI" id="CHEBI:75466"/>
    </reaction>
    <physiologicalReaction direction="left-to-right" evidence="2">
        <dbReference type="Rhea" id="RHEA:54245"/>
    </physiologicalReaction>
</comment>
<comment type="catalytic activity">
    <reaction evidence="2">
        <text>CDP-ethanolamine + 1,2-di-(9Z-octadecenoyl)-sn-glycerol = 1,2-di-(9Z-octadecenoyl)-sn-glycero-3-phosphoethanolamine + CMP + H(+)</text>
        <dbReference type="Rhea" id="RHEA:54248"/>
        <dbReference type="ChEBI" id="CHEBI:15378"/>
        <dbReference type="ChEBI" id="CHEBI:52333"/>
        <dbReference type="ChEBI" id="CHEBI:57876"/>
        <dbReference type="ChEBI" id="CHEBI:60377"/>
        <dbReference type="ChEBI" id="CHEBI:74986"/>
    </reaction>
    <physiologicalReaction direction="left-to-right" evidence="2">
        <dbReference type="Rhea" id="RHEA:54249"/>
    </physiologicalReaction>
</comment>
<comment type="catalytic activity">
    <reaction evidence="2">
        <text>1-hexadecanoyl-2-(9Z-octadecenoyl)-sn-glycerol + CDP-ethanolamine = 1-hexadecanoyl-2-(9Z-octadecenoyl)-sn-glycero-3-phosphoethanolamine + CMP + H(+)</text>
        <dbReference type="Rhea" id="RHEA:54252"/>
        <dbReference type="ChEBI" id="CHEBI:15378"/>
        <dbReference type="ChEBI" id="CHEBI:57876"/>
        <dbReference type="ChEBI" id="CHEBI:60377"/>
        <dbReference type="ChEBI" id="CHEBI:73007"/>
        <dbReference type="ChEBI" id="CHEBI:75466"/>
    </reaction>
    <physiologicalReaction direction="left-to-right" evidence="2">
        <dbReference type="Rhea" id="RHEA:54253"/>
    </physiologicalReaction>
</comment>
<comment type="catalytic activity">
    <reaction evidence="2">
        <text>1-hexadecanoyl-2-(4Z,7Z,10Z,13Z,16Z,19Z-docosahexaenoyl)-sn-glycerol + CDP-choline = 1-hexadecanoyl-2-(4Z,7Z,10Z,13Z,16Z,19Z-docosahexaenoyl)-sn-glycero-3-phosphocholine + CMP + H(+)</text>
        <dbReference type="Rhea" id="RHEA:54332"/>
        <dbReference type="ChEBI" id="CHEBI:15378"/>
        <dbReference type="ChEBI" id="CHEBI:58779"/>
        <dbReference type="ChEBI" id="CHEBI:60377"/>
        <dbReference type="ChEBI" id="CHEBI:74963"/>
        <dbReference type="ChEBI" id="CHEBI:82949"/>
    </reaction>
    <physiologicalReaction direction="left-to-right" evidence="2">
        <dbReference type="Rhea" id="RHEA:54333"/>
    </physiologicalReaction>
</comment>
<comment type="catalytic activity">
    <reaction evidence="2">
        <text>1,2-di-(9Z-hexadecenoyl)-sn-glycerol + CDP-choline = 1,2-di-(9Z-hexadecenoyl)-sn-glycero-3-phosphocholine + CMP + H(+)</text>
        <dbReference type="Rhea" id="RHEA:54336"/>
        <dbReference type="ChEBI" id="CHEBI:15378"/>
        <dbReference type="ChEBI" id="CHEBI:58779"/>
        <dbReference type="ChEBI" id="CHEBI:60377"/>
        <dbReference type="ChEBI" id="CHEBI:83717"/>
        <dbReference type="ChEBI" id="CHEBI:84417"/>
    </reaction>
    <physiologicalReaction direction="left-to-right" evidence="2">
        <dbReference type="Rhea" id="RHEA:54337"/>
    </physiologicalReaction>
</comment>
<comment type="catalytic activity">
    <reaction evidence="2">
        <text>1,2-di-(9Z-hexadecenoyl)-sn-glycerol + CDP-ethanolamine = 1,2-di-(9Z-hexadecenoyl)-sn-glycero-3-phosphoethanolamine + CMP + H(+)</text>
        <dbReference type="Rhea" id="RHEA:54340"/>
        <dbReference type="ChEBI" id="CHEBI:15378"/>
        <dbReference type="ChEBI" id="CHEBI:57876"/>
        <dbReference type="ChEBI" id="CHEBI:60377"/>
        <dbReference type="ChEBI" id="CHEBI:84417"/>
        <dbReference type="ChEBI" id="CHEBI:138145"/>
    </reaction>
    <physiologicalReaction direction="left-to-right" evidence="2">
        <dbReference type="Rhea" id="RHEA:54341"/>
    </physiologicalReaction>
</comment>
<comment type="catalytic activity">
    <reaction evidence="2">
        <text>1-O-hexadecyl-2-acetyl-sn-glycerol + CDP-choline = 1-O-hexadecyl-2-acetyl-sn-glycero-3-phosphocholine + CMP + H(+)</text>
        <dbReference type="Rhea" id="RHEA:54348"/>
        <dbReference type="ChEBI" id="CHEBI:15378"/>
        <dbReference type="ChEBI" id="CHEBI:44811"/>
        <dbReference type="ChEBI" id="CHEBI:58779"/>
        <dbReference type="ChEBI" id="CHEBI:60377"/>
        <dbReference type="ChEBI" id="CHEBI:75936"/>
    </reaction>
    <physiologicalReaction direction="left-to-right" evidence="2">
        <dbReference type="Rhea" id="RHEA:54349"/>
    </physiologicalReaction>
</comment>
<comment type="catalytic activity">
    <reaction evidence="2">
        <text>1-O-hexadecyl-2-(5Z,8Z,11Z,14Z-eicosatetraenoyl)-sn-glycerol + CDP-choline = 1-O-hexadecyl-2-(5Z,8Z,11Z,14Z)-eicosatetraenoyl-sn-glycero-3-phosphocholine + CMP + H(+)</text>
        <dbReference type="Rhea" id="RHEA:54352"/>
        <dbReference type="ChEBI" id="CHEBI:15378"/>
        <dbReference type="ChEBI" id="CHEBI:55430"/>
        <dbReference type="ChEBI" id="CHEBI:58779"/>
        <dbReference type="ChEBI" id="CHEBI:60377"/>
        <dbReference type="ChEBI" id="CHEBI:77184"/>
    </reaction>
    <physiologicalReaction direction="left-to-right" evidence="2">
        <dbReference type="Rhea" id="RHEA:54353"/>
    </physiologicalReaction>
</comment>
<comment type="cofactor">
    <cofactor evidence="2">
        <name>Mg(2+)</name>
        <dbReference type="ChEBI" id="CHEBI:18420"/>
    </cofactor>
    <cofactor evidence="2">
        <name>Mn(2+)</name>
        <dbReference type="ChEBI" id="CHEBI:29035"/>
    </cofactor>
</comment>
<comment type="pathway">
    <text evidence="2">Phospholipid metabolism; phosphatidylethanolamine biosynthesis; phosphatidylethanolamine from ethanolamine: step 3/3.</text>
</comment>
<comment type="pathway">
    <text evidence="2">Phospholipid metabolism; phosphatidylcholine biosynthesis; phosphatidylcholine from phosphocholine: step 2/2.</text>
</comment>
<comment type="subunit">
    <text evidence="2">Homodimer.</text>
</comment>
<comment type="subcellular location">
    <subcellularLocation>
        <location evidence="2">Endoplasmic reticulum membrane</location>
        <topology evidence="2">Multi-pass membrane protein</topology>
    </subcellularLocation>
    <subcellularLocation>
        <location evidence="2">Nucleus membrane</location>
        <topology evidence="2">Multi-pass membrane protein</topology>
    </subcellularLocation>
</comment>
<comment type="similarity">
    <text evidence="5">Belongs to the CDP-alcohol phosphatidyltransferase class-I family.</text>
</comment>
<reference key="1">
    <citation type="journal article" date="2004" name="Genome Res.">
        <title>The status, quality, and expansion of the NIH full-length cDNA project: the Mammalian Gene Collection (MGC).</title>
        <authorList>
            <consortium name="The MGC Project Team"/>
        </authorList>
    </citation>
    <scope>NUCLEOTIDE SEQUENCE [LARGE SCALE MRNA]</scope>
    <source>
        <tissue>Lung</tissue>
    </source>
</reference>
<feature type="chain" id="PRO_0000289247" description="Choline/ethanolaminephosphotransferase 1">
    <location>
        <begin position="1"/>
        <end position="416"/>
    </location>
</feature>
<feature type="transmembrane region" description="Helical" evidence="2">
    <location>
        <begin position="89"/>
        <end position="108"/>
    </location>
</feature>
<feature type="transmembrane region" description="Helical" evidence="2">
    <location>
        <begin position="116"/>
        <end position="133"/>
    </location>
</feature>
<feature type="transmembrane region" description="Helical" evidence="2">
    <location>
        <begin position="156"/>
        <end position="176"/>
    </location>
</feature>
<feature type="transmembrane region" description="Helical" evidence="2">
    <location>
        <begin position="180"/>
        <end position="199"/>
    </location>
</feature>
<feature type="transmembrane region" description="Helical" evidence="2">
    <location>
        <begin position="210"/>
        <end position="230"/>
    </location>
</feature>
<feature type="transmembrane region" description="Helical" evidence="2">
    <location>
        <begin position="246"/>
        <end position="267"/>
    </location>
</feature>
<feature type="transmembrane region" description="Helical" evidence="2">
    <location>
        <begin position="286"/>
        <end position="306"/>
    </location>
</feature>
<feature type="transmembrane region" description="Helical" evidence="2">
    <location>
        <begin position="315"/>
        <end position="334"/>
    </location>
</feature>
<feature type="transmembrane region" description="Helical" evidence="2">
    <location>
        <begin position="349"/>
        <end position="363"/>
    </location>
</feature>
<feature type="transmembrane region" description="Helical" evidence="2">
    <location>
        <begin position="368"/>
        <end position="388"/>
    </location>
</feature>
<feature type="region of interest" description="Disordered" evidence="4">
    <location>
        <begin position="1"/>
        <end position="20"/>
    </location>
</feature>
<feature type="active site" description="Proton acceptor" evidence="2">
    <location>
        <position position="155"/>
    </location>
</feature>
<feature type="binding site" evidence="2">
    <location>
        <position position="86"/>
    </location>
    <ligand>
        <name>CDP-choline</name>
        <dbReference type="ChEBI" id="CHEBI:58779"/>
    </ligand>
</feature>
<feature type="binding site" evidence="2">
    <location>
        <position position="133"/>
    </location>
    <ligand>
        <name>Mg(2+)</name>
        <dbReference type="ChEBI" id="CHEBI:18420"/>
        <label>1</label>
    </ligand>
</feature>
<feature type="binding site" evidence="2">
    <location>
        <position position="133"/>
    </location>
    <ligand>
        <name>Mg(2+)</name>
        <dbReference type="ChEBI" id="CHEBI:18420"/>
        <label>2</label>
    </ligand>
</feature>
<feature type="binding site" evidence="2">
    <location>
        <position position="151"/>
    </location>
    <ligand>
        <name>CDP-choline</name>
        <dbReference type="ChEBI" id="CHEBI:58779"/>
    </ligand>
</feature>
<feature type="binding site" evidence="2">
    <location>
        <position position="154"/>
    </location>
    <ligand>
        <name>Mg(2+)</name>
        <dbReference type="ChEBI" id="CHEBI:18420"/>
        <label>1</label>
    </ligand>
</feature>
<feature type="binding site" evidence="2">
    <location>
        <position position="154"/>
    </location>
    <ligand>
        <name>Mg(2+)</name>
        <dbReference type="ChEBI" id="CHEBI:18420"/>
        <label>2</label>
    </ligand>
</feature>
<feature type="binding site" evidence="2">
    <location>
        <position position="158"/>
    </location>
    <ligand>
        <name>Mg(2+)</name>
        <dbReference type="ChEBI" id="CHEBI:18420"/>
        <label>2</label>
    </ligand>
</feature>
<feature type="site" description="Increases basicity of active site His" evidence="1">
    <location>
        <position position="151"/>
    </location>
</feature>
<feature type="modified residue" description="Phosphoserine" evidence="2">
    <location>
        <position position="18"/>
    </location>
</feature>
<feature type="modified residue" description="Phosphothreonine" evidence="2">
    <location>
        <position position="40"/>
    </location>
</feature>
<feature type="glycosylation site" description="N-linked (GlcNAc...) asparagine" evidence="3">
    <location>
        <position position="144"/>
    </location>
</feature>
<keyword id="KW-0256">Endoplasmic reticulum</keyword>
<keyword id="KW-0325">Glycoprotein</keyword>
<keyword id="KW-0444">Lipid biosynthesis</keyword>
<keyword id="KW-0443">Lipid metabolism</keyword>
<keyword id="KW-0460">Magnesium</keyword>
<keyword id="KW-0464">Manganese</keyword>
<keyword id="KW-0472">Membrane</keyword>
<keyword id="KW-0479">Metal-binding</keyword>
<keyword id="KW-0539">Nucleus</keyword>
<keyword id="KW-0594">Phospholipid biosynthesis</keyword>
<keyword id="KW-1208">Phospholipid metabolism</keyword>
<keyword id="KW-0597">Phosphoprotein</keyword>
<keyword id="KW-1185">Reference proteome</keyword>
<keyword id="KW-0808">Transferase</keyword>
<keyword id="KW-0812">Transmembrane</keyword>
<keyword id="KW-1133">Transmembrane helix</keyword>